<evidence type="ECO:0000255" key="1">
    <source>
        <dbReference type="HAMAP-Rule" id="MF_00537"/>
    </source>
</evidence>
<evidence type="ECO:0000305" key="2"/>
<proteinExistence type="inferred from homology"/>
<gene>
    <name evidence="1" type="primary">rpsN</name>
    <name type="ordered locus">ELI_08125</name>
</gene>
<organism>
    <name type="scientific">Erythrobacter litoralis (strain HTCC2594)</name>
    <dbReference type="NCBI Taxonomy" id="314225"/>
    <lineage>
        <taxon>Bacteria</taxon>
        <taxon>Pseudomonadati</taxon>
        <taxon>Pseudomonadota</taxon>
        <taxon>Alphaproteobacteria</taxon>
        <taxon>Sphingomonadales</taxon>
        <taxon>Erythrobacteraceae</taxon>
        <taxon>Erythrobacter/Porphyrobacter group</taxon>
        <taxon>Erythrobacter</taxon>
    </lineage>
</organism>
<keyword id="KW-1185">Reference proteome</keyword>
<keyword id="KW-0687">Ribonucleoprotein</keyword>
<keyword id="KW-0689">Ribosomal protein</keyword>
<keyword id="KW-0694">RNA-binding</keyword>
<keyword id="KW-0699">rRNA-binding</keyword>
<protein>
    <recommendedName>
        <fullName evidence="1">Small ribosomal subunit protein uS14</fullName>
    </recommendedName>
    <alternativeName>
        <fullName evidence="2">30S ribosomal protein S14</fullName>
    </alternativeName>
</protein>
<dbReference type="EMBL" id="CP000157">
    <property type="protein sequence ID" value="ABC63717.1"/>
    <property type="molecule type" value="Genomic_DNA"/>
</dbReference>
<dbReference type="RefSeq" id="WP_011414549.1">
    <property type="nucleotide sequence ID" value="NC_007722.1"/>
</dbReference>
<dbReference type="SMR" id="Q2N9C4"/>
<dbReference type="STRING" id="314225.ELI_08125"/>
<dbReference type="KEGG" id="eli:ELI_08125"/>
<dbReference type="eggNOG" id="COG0199">
    <property type="taxonomic scope" value="Bacteria"/>
</dbReference>
<dbReference type="HOGENOM" id="CLU_139869_0_1_5"/>
<dbReference type="OrthoDB" id="9810484at2"/>
<dbReference type="Proteomes" id="UP000008808">
    <property type="component" value="Chromosome"/>
</dbReference>
<dbReference type="GO" id="GO:0005737">
    <property type="term" value="C:cytoplasm"/>
    <property type="evidence" value="ECO:0007669"/>
    <property type="project" value="UniProtKB-ARBA"/>
</dbReference>
<dbReference type="GO" id="GO:0015935">
    <property type="term" value="C:small ribosomal subunit"/>
    <property type="evidence" value="ECO:0007669"/>
    <property type="project" value="TreeGrafter"/>
</dbReference>
<dbReference type="GO" id="GO:0019843">
    <property type="term" value="F:rRNA binding"/>
    <property type="evidence" value="ECO:0007669"/>
    <property type="project" value="UniProtKB-UniRule"/>
</dbReference>
<dbReference type="GO" id="GO:0003735">
    <property type="term" value="F:structural constituent of ribosome"/>
    <property type="evidence" value="ECO:0007669"/>
    <property type="project" value="InterPro"/>
</dbReference>
<dbReference type="GO" id="GO:0006412">
    <property type="term" value="P:translation"/>
    <property type="evidence" value="ECO:0007669"/>
    <property type="project" value="UniProtKB-UniRule"/>
</dbReference>
<dbReference type="FunFam" id="1.10.287.1480:FF:000001">
    <property type="entry name" value="30S ribosomal protein S14"/>
    <property type="match status" value="1"/>
</dbReference>
<dbReference type="Gene3D" id="1.10.287.1480">
    <property type="match status" value="1"/>
</dbReference>
<dbReference type="HAMAP" id="MF_00537">
    <property type="entry name" value="Ribosomal_uS14_1"/>
    <property type="match status" value="1"/>
</dbReference>
<dbReference type="InterPro" id="IPR001209">
    <property type="entry name" value="Ribosomal_uS14"/>
</dbReference>
<dbReference type="InterPro" id="IPR023036">
    <property type="entry name" value="Ribosomal_uS14_bac/plastid"/>
</dbReference>
<dbReference type="NCBIfam" id="NF006477">
    <property type="entry name" value="PRK08881.1"/>
    <property type="match status" value="1"/>
</dbReference>
<dbReference type="PANTHER" id="PTHR19836">
    <property type="entry name" value="30S RIBOSOMAL PROTEIN S14"/>
    <property type="match status" value="1"/>
</dbReference>
<dbReference type="PANTHER" id="PTHR19836:SF19">
    <property type="entry name" value="SMALL RIBOSOMAL SUBUNIT PROTEIN US14M"/>
    <property type="match status" value="1"/>
</dbReference>
<dbReference type="Pfam" id="PF00253">
    <property type="entry name" value="Ribosomal_S14"/>
    <property type="match status" value="1"/>
</dbReference>
<dbReference type="SUPFAM" id="SSF57716">
    <property type="entry name" value="Glucocorticoid receptor-like (DNA-binding domain)"/>
    <property type="match status" value="1"/>
</dbReference>
<accession>Q2N9C4</accession>
<name>RS14_ERYLH</name>
<reference key="1">
    <citation type="journal article" date="2009" name="J. Bacteriol.">
        <title>Complete genome sequence of Erythrobacter litoralis HTCC2594.</title>
        <authorList>
            <person name="Oh H.M."/>
            <person name="Giovannoni S.J."/>
            <person name="Ferriera S."/>
            <person name="Johnson J."/>
            <person name="Cho J.C."/>
        </authorList>
    </citation>
    <scope>NUCLEOTIDE SEQUENCE [LARGE SCALE GENOMIC DNA]</scope>
    <source>
        <strain>HTCC2594</strain>
    </source>
</reference>
<comment type="function">
    <text evidence="1">Binds 16S rRNA, required for the assembly of 30S particles and may also be responsible for determining the conformation of the 16S rRNA at the A site.</text>
</comment>
<comment type="subunit">
    <text evidence="1">Part of the 30S ribosomal subunit. Contacts proteins S3 and S10.</text>
</comment>
<comment type="similarity">
    <text evidence="1">Belongs to the universal ribosomal protein uS14 family.</text>
</comment>
<feature type="chain" id="PRO_1000128401" description="Small ribosomal subunit protein uS14">
    <location>
        <begin position="1"/>
        <end position="101"/>
    </location>
</feature>
<sequence>MAKLSSINKNEKRKKLVKQYAAKYEKLKAIANDKSLDETERLIARLKMAEIPRNANPTRVRNRCATTGRPRGYYRKFGINRIELRDLGNKGLIPGLTKSSW</sequence>